<dbReference type="EC" id="2.7.1.164" evidence="2"/>
<dbReference type="EMBL" id="AK077585">
    <property type="protein sequence ID" value="BAC36878.1"/>
    <property type="molecule type" value="mRNA"/>
</dbReference>
<dbReference type="EMBL" id="BC110381">
    <property type="protein sequence ID" value="AAI10382.1"/>
    <property type="molecule type" value="mRNA"/>
</dbReference>
<dbReference type="EMBL" id="BC115503">
    <property type="protein sequence ID" value="AAI15504.2"/>
    <property type="molecule type" value="mRNA"/>
</dbReference>
<dbReference type="CCDS" id="CCDS21914.1">
    <molecule id="Q8BP74-1"/>
</dbReference>
<dbReference type="RefSeq" id="NP_001034623.1">
    <molecule id="Q8BP74-1"/>
    <property type="nucleotide sequence ID" value="NM_001039534.1"/>
</dbReference>
<dbReference type="FunCoup" id="Q8BP74">
    <property type="interactions" value="1494"/>
</dbReference>
<dbReference type="STRING" id="10090.ENSMUSP00000075037"/>
<dbReference type="PhosphoSitePlus" id="Q8BP74"/>
<dbReference type="SwissPalm" id="Q8BP74"/>
<dbReference type="PaxDb" id="10090-ENSMUSP00000075037"/>
<dbReference type="PeptideAtlas" id="Q8BP74"/>
<dbReference type="ProteomicsDB" id="291579">
    <molecule id="Q8BP74-1"/>
</dbReference>
<dbReference type="ProteomicsDB" id="291580">
    <molecule id="Q8BP74-2"/>
</dbReference>
<dbReference type="Pumba" id="Q8BP74"/>
<dbReference type="Antibodypedia" id="46364">
    <property type="antibodies" value="56 antibodies from 14 providers"/>
</dbReference>
<dbReference type="DNASU" id="214580"/>
<dbReference type="Ensembl" id="ENSMUST00000075610.13">
    <molecule id="Q8BP74-1"/>
    <property type="protein sequence ID" value="ENSMUSP00000075037.7"/>
    <property type="gene ID" value="ENSMUSG00000063179.14"/>
</dbReference>
<dbReference type="Ensembl" id="ENSMUST00000145114.8">
    <molecule id="Q8BP74-2"/>
    <property type="protein sequence ID" value="ENSMUSP00000118636.2"/>
    <property type="gene ID" value="ENSMUSG00000063179.14"/>
</dbReference>
<dbReference type="GeneID" id="214580"/>
<dbReference type="KEGG" id="mmu:214580"/>
<dbReference type="UCSC" id="uc009kbh.1">
    <molecule id="Q8BP74-1"/>
    <property type="organism name" value="mouse"/>
</dbReference>
<dbReference type="AGR" id="MGI:2685945"/>
<dbReference type="CTD" id="118672"/>
<dbReference type="MGI" id="MGI:2685945">
    <property type="gene designation" value="Pstk"/>
</dbReference>
<dbReference type="VEuPathDB" id="HostDB:ENSMUSG00000063179"/>
<dbReference type="eggNOG" id="KOG4622">
    <property type="taxonomic scope" value="Eukaryota"/>
</dbReference>
<dbReference type="GeneTree" id="ENSGT00390000017554"/>
<dbReference type="HOGENOM" id="CLU_060632_0_0_1"/>
<dbReference type="InParanoid" id="Q8BP74"/>
<dbReference type="OMA" id="HYYRSMR"/>
<dbReference type="OrthoDB" id="9972657at2759"/>
<dbReference type="PhylomeDB" id="Q8BP74"/>
<dbReference type="TreeFam" id="TF321264"/>
<dbReference type="BioCyc" id="MetaCyc:MONOMER-14957"/>
<dbReference type="BRENDA" id="2.7.1.164">
    <property type="organism ID" value="3474"/>
</dbReference>
<dbReference type="UniPathway" id="UPA00906">
    <property type="reaction ID" value="UER00897"/>
</dbReference>
<dbReference type="BioGRID-ORCS" id="214580">
    <property type="hits" value="20 hits in 80 CRISPR screens"/>
</dbReference>
<dbReference type="ChiTaRS" id="Pstk">
    <property type="organism name" value="mouse"/>
</dbReference>
<dbReference type="PRO" id="PR:Q8BP74"/>
<dbReference type="Proteomes" id="UP000000589">
    <property type="component" value="Chromosome 7"/>
</dbReference>
<dbReference type="RNAct" id="Q8BP74">
    <property type="molecule type" value="protein"/>
</dbReference>
<dbReference type="Bgee" id="ENSMUSG00000063179">
    <property type="expression patterns" value="Expressed in hindlimb stylopod muscle and 253 other cell types or tissues"/>
</dbReference>
<dbReference type="ExpressionAtlas" id="Q8BP74">
    <property type="expression patterns" value="baseline and differential"/>
</dbReference>
<dbReference type="GO" id="GO:0005829">
    <property type="term" value="C:cytosol"/>
    <property type="evidence" value="ECO:0000304"/>
    <property type="project" value="Reactome"/>
</dbReference>
<dbReference type="GO" id="GO:0005739">
    <property type="term" value="C:mitochondrion"/>
    <property type="evidence" value="ECO:0007005"/>
    <property type="project" value="MGI"/>
</dbReference>
<dbReference type="GO" id="GO:0005524">
    <property type="term" value="F:ATP binding"/>
    <property type="evidence" value="ECO:0007669"/>
    <property type="project" value="UniProtKB-KW"/>
</dbReference>
<dbReference type="GO" id="GO:0043915">
    <property type="term" value="F:L-seryl-tRNA(Sec) kinase activity"/>
    <property type="evidence" value="ECO:0000314"/>
    <property type="project" value="MGI"/>
</dbReference>
<dbReference type="GO" id="GO:0000049">
    <property type="term" value="F:tRNA binding"/>
    <property type="evidence" value="ECO:0000314"/>
    <property type="project" value="MGI"/>
</dbReference>
<dbReference type="GO" id="GO:0001514">
    <property type="term" value="P:selenocysteine incorporation"/>
    <property type="evidence" value="ECO:0000314"/>
    <property type="project" value="MGI"/>
</dbReference>
<dbReference type="Gene3D" id="3.40.50.300">
    <property type="entry name" value="P-loop containing nucleotide triphosphate hydrolases"/>
    <property type="match status" value="1"/>
</dbReference>
<dbReference type="InterPro" id="IPR013641">
    <property type="entry name" value="KTI12/PSTK"/>
</dbReference>
<dbReference type="InterPro" id="IPR020028">
    <property type="entry name" value="L-seryl-tRNA_Sec_kinase_euk"/>
</dbReference>
<dbReference type="InterPro" id="IPR027417">
    <property type="entry name" value="P-loop_NTPase"/>
</dbReference>
<dbReference type="InterPro" id="IPR052648">
    <property type="entry name" value="Ser-tRNA(Sec)_kinase"/>
</dbReference>
<dbReference type="NCBIfam" id="TIGR03575">
    <property type="entry name" value="selen_PSTK_euk"/>
    <property type="match status" value="1"/>
</dbReference>
<dbReference type="PANTHER" id="PTHR20873">
    <property type="entry name" value="L-SERYL-TRNA(SEC) KINASE"/>
    <property type="match status" value="1"/>
</dbReference>
<dbReference type="PANTHER" id="PTHR20873:SF0">
    <property type="entry name" value="L-SERYL-TRNA(SEC) KINASE"/>
    <property type="match status" value="1"/>
</dbReference>
<dbReference type="Pfam" id="PF08433">
    <property type="entry name" value="KTI12"/>
    <property type="match status" value="1"/>
</dbReference>
<dbReference type="SUPFAM" id="SSF52540">
    <property type="entry name" value="P-loop containing nucleoside triphosphate hydrolases"/>
    <property type="match status" value="2"/>
</dbReference>
<name>PSTK_MOUSE</name>
<keyword id="KW-0025">Alternative splicing</keyword>
<keyword id="KW-0067">ATP-binding</keyword>
<keyword id="KW-0418">Kinase</keyword>
<keyword id="KW-0460">Magnesium</keyword>
<keyword id="KW-0547">Nucleotide-binding</keyword>
<keyword id="KW-0648">Protein biosynthesis</keyword>
<keyword id="KW-1185">Reference proteome</keyword>
<keyword id="KW-0808">Transferase</keyword>
<proteinExistence type="evidence at protein level"/>
<protein>
    <recommendedName>
        <fullName>L-seryl-tRNA(Sec) kinase</fullName>
        <ecNumber evidence="2">2.7.1.164</ecNumber>
    </recommendedName>
    <alternativeName>
        <fullName>O-phosphoseryl-tRNA(Sec) kinase</fullName>
    </alternativeName>
</protein>
<gene>
    <name type="primary">Pstk</name>
</gene>
<comment type="function">
    <text evidence="2">Specifically phosphorylates seryl-tRNA(Sec) to O-phosphoseryl-tRNA(Sec), an activated intermediate for selenocysteine biosynthesis. No activity with other tRNAs has been detected.</text>
</comment>
<comment type="catalytic activity">
    <reaction evidence="2">
        <text>L-seryl-tRNA(Sec) + ATP = O-phospho-L-seryl-tRNA(Sec) + ADP</text>
        <dbReference type="Rhea" id="RHEA:25037"/>
        <dbReference type="Rhea" id="RHEA-COMP:9742"/>
        <dbReference type="Rhea" id="RHEA-COMP:9947"/>
        <dbReference type="ChEBI" id="CHEBI:30616"/>
        <dbReference type="ChEBI" id="CHEBI:78533"/>
        <dbReference type="ChEBI" id="CHEBI:78551"/>
        <dbReference type="ChEBI" id="CHEBI:456216"/>
        <dbReference type="EC" id="2.7.1.164"/>
    </reaction>
</comment>
<comment type="cofactor">
    <cofactor evidence="2">
        <name>Mg(2+)</name>
        <dbReference type="ChEBI" id="CHEBI:18420"/>
    </cofactor>
</comment>
<comment type="pathway">
    <text evidence="5">Aminoacyl-tRNA biosynthesis; selenocysteinyl-tRNA(Sec) biosynthesis; selenocysteinyl-tRNA(Sec) from L-seryl-tRNA(Sec) (archaeal/eukaryal route): step 1/2.</text>
</comment>
<comment type="alternative products">
    <event type="alternative splicing"/>
    <isoform>
        <id>Q8BP74-1</id>
        <name>1</name>
        <sequence type="displayed"/>
    </isoform>
    <isoform>
        <id>Q8BP74-2</id>
        <name>2</name>
        <sequence type="described" ref="VSP_024860"/>
    </isoform>
</comment>
<comment type="similarity">
    <text evidence="4">Belongs to the L-seryl-tRNA(Sec) kinase family.</text>
</comment>
<accession>Q8BP74</accession>
<accession>Q0D2I7</accession>
<accession>Q14C09</accession>
<evidence type="ECO:0000255" key="1"/>
<evidence type="ECO:0000269" key="2">
    <source>
    </source>
</evidence>
<evidence type="ECO:0000303" key="3">
    <source>
    </source>
</evidence>
<evidence type="ECO:0000305" key="4"/>
<evidence type="ECO:0000305" key="5">
    <source>
    </source>
</evidence>
<sequence length="359" mass="40763">MKTAAARGATRRDGQPKLGLCVLCGLPAAGKSTFARALALRLRRERGWAVGVLSYDDVLPLALPDCDGTQPRPSQWKMFRQELLKHLECFLVAVISGAQMSAPPNRTEAVWEDFITCLKSQDLMIFPTALEAQPCHLLAKPAVSRPLFLVLDDNFYYQSMRYEVYQLARKYSLGFCQLFLDCPLETCLKRNGERSQPLPDETIQLMGRKIEKPNPEKNAWEHNSLIIQSSACSLEASLEVTGLLLTALENPIKCVEDNTEQKETDRIICSTNILHKADETLRRTVSQTMREAKDEQIPLNNLKHLAEELNKLKADVLEDLRQGNRKYLCFQQTTDLSDIISSFCKERDTIVQKYFSKQH</sequence>
<organism>
    <name type="scientific">Mus musculus</name>
    <name type="common">Mouse</name>
    <dbReference type="NCBI Taxonomy" id="10090"/>
    <lineage>
        <taxon>Eukaryota</taxon>
        <taxon>Metazoa</taxon>
        <taxon>Chordata</taxon>
        <taxon>Craniata</taxon>
        <taxon>Vertebrata</taxon>
        <taxon>Euteleostomi</taxon>
        <taxon>Mammalia</taxon>
        <taxon>Eutheria</taxon>
        <taxon>Euarchontoglires</taxon>
        <taxon>Glires</taxon>
        <taxon>Rodentia</taxon>
        <taxon>Myomorpha</taxon>
        <taxon>Muroidea</taxon>
        <taxon>Muridae</taxon>
        <taxon>Murinae</taxon>
        <taxon>Mus</taxon>
        <taxon>Mus</taxon>
    </lineage>
</organism>
<feature type="chain" id="PRO_0000097081" description="L-seryl-tRNA(Sec) kinase">
    <location>
        <begin position="1"/>
        <end position="359"/>
    </location>
</feature>
<feature type="binding site" evidence="1">
    <location>
        <begin position="25"/>
        <end position="32"/>
    </location>
    <ligand>
        <name>ATP</name>
        <dbReference type="ChEBI" id="CHEBI:30616"/>
    </ligand>
</feature>
<feature type="splice variant" id="VSP_024860" description="In isoform 2." evidence="3">
    <original>ETDRIICSTNILHKADETLRRTVSQTMREAKDEQIPLNNLKHLAEELNKLKADVLEDLRQGNRKYLCFQQTTDLSDIISSFCKERDTIVQKYFSKQH</original>
    <variation>NYLFY</variation>
    <location>
        <begin position="263"/>
        <end position="359"/>
    </location>
</feature>
<reference key="1">
    <citation type="journal article" date="2005" name="Science">
        <title>The transcriptional landscape of the mammalian genome.</title>
        <authorList>
            <person name="Carninci P."/>
            <person name="Kasukawa T."/>
            <person name="Katayama S."/>
            <person name="Gough J."/>
            <person name="Frith M.C."/>
            <person name="Maeda N."/>
            <person name="Oyama R."/>
            <person name="Ravasi T."/>
            <person name="Lenhard B."/>
            <person name="Wells C."/>
            <person name="Kodzius R."/>
            <person name="Shimokawa K."/>
            <person name="Bajic V.B."/>
            <person name="Brenner S.E."/>
            <person name="Batalov S."/>
            <person name="Forrest A.R."/>
            <person name="Zavolan M."/>
            <person name="Davis M.J."/>
            <person name="Wilming L.G."/>
            <person name="Aidinis V."/>
            <person name="Allen J.E."/>
            <person name="Ambesi-Impiombato A."/>
            <person name="Apweiler R."/>
            <person name="Aturaliya R.N."/>
            <person name="Bailey T.L."/>
            <person name="Bansal M."/>
            <person name="Baxter L."/>
            <person name="Beisel K.W."/>
            <person name="Bersano T."/>
            <person name="Bono H."/>
            <person name="Chalk A.M."/>
            <person name="Chiu K.P."/>
            <person name="Choudhary V."/>
            <person name="Christoffels A."/>
            <person name="Clutterbuck D.R."/>
            <person name="Crowe M.L."/>
            <person name="Dalla E."/>
            <person name="Dalrymple B.P."/>
            <person name="de Bono B."/>
            <person name="Della Gatta G."/>
            <person name="di Bernardo D."/>
            <person name="Down T."/>
            <person name="Engstrom P."/>
            <person name="Fagiolini M."/>
            <person name="Faulkner G."/>
            <person name="Fletcher C.F."/>
            <person name="Fukushima T."/>
            <person name="Furuno M."/>
            <person name="Futaki S."/>
            <person name="Gariboldi M."/>
            <person name="Georgii-Hemming P."/>
            <person name="Gingeras T.R."/>
            <person name="Gojobori T."/>
            <person name="Green R.E."/>
            <person name="Gustincich S."/>
            <person name="Harbers M."/>
            <person name="Hayashi Y."/>
            <person name="Hensch T.K."/>
            <person name="Hirokawa N."/>
            <person name="Hill D."/>
            <person name="Huminiecki L."/>
            <person name="Iacono M."/>
            <person name="Ikeo K."/>
            <person name="Iwama A."/>
            <person name="Ishikawa T."/>
            <person name="Jakt M."/>
            <person name="Kanapin A."/>
            <person name="Katoh M."/>
            <person name="Kawasawa Y."/>
            <person name="Kelso J."/>
            <person name="Kitamura H."/>
            <person name="Kitano H."/>
            <person name="Kollias G."/>
            <person name="Krishnan S.P."/>
            <person name="Kruger A."/>
            <person name="Kummerfeld S.K."/>
            <person name="Kurochkin I.V."/>
            <person name="Lareau L.F."/>
            <person name="Lazarevic D."/>
            <person name="Lipovich L."/>
            <person name="Liu J."/>
            <person name="Liuni S."/>
            <person name="McWilliam S."/>
            <person name="Madan Babu M."/>
            <person name="Madera M."/>
            <person name="Marchionni L."/>
            <person name="Matsuda H."/>
            <person name="Matsuzawa S."/>
            <person name="Miki H."/>
            <person name="Mignone F."/>
            <person name="Miyake S."/>
            <person name="Morris K."/>
            <person name="Mottagui-Tabar S."/>
            <person name="Mulder N."/>
            <person name="Nakano N."/>
            <person name="Nakauchi H."/>
            <person name="Ng P."/>
            <person name="Nilsson R."/>
            <person name="Nishiguchi S."/>
            <person name="Nishikawa S."/>
            <person name="Nori F."/>
            <person name="Ohara O."/>
            <person name="Okazaki Y."/>
            <person name="Orlando V."/>
            <person name="Pang K.C."/>
            <person name="Pavan W.J."/>
            <person name="Pavesi G."/>
            <person name="Pesole G."/>
            <person name="Petrovsky N."/>
            <person name="Piazza S."/>
            <person name="Reed J."/>
            <person name="Reid J.F."/>
            <person name="Ring B.Z."/>
            <person name="Ringwald M."/>
            <person name="Rost B."/>
            <person name="Ruan Y."/>
            <person name="Salzberg S.L."/>
            <person name="Sandelin A."/>
            <person name="Schneider C."/>
            <person name="Schoenbach C."/>
            <person name="Sekiguchi K."/>
            <person name="Semple C.A."/>
            <person name="Seno S."/>
            <person name="Sessa L."/>
            <person name="Sheng Y."/>
            <person name="Shibata Y."/>
            <person name="Shimada H."/>
            <person name="Shimada K."/>
            <person name="Silva D."/>
            <person name="Sinclair B."/>
            <person name="Sperling S."/>
            <person name="Stupka E."/>
            <person name="Sugiura K."/>
            <person name="Sultana R."/>
            <person name="Takenaka Y."/>
            <person name="Taki K."/>
            <person name="Tammoja K."/>
            <person name="Tan S.L."/>
            <person name="Tang S."/>
            <person name="Taylor M.S."/>
            <person name="Tegner J."/>
            <person name="Teichmann S.A."/>
            <person name="Ueda H.R."/>
            <person name="van Nimwegen E."/>
            <person name="Verardo R."/>
            <person name="Wei C.L."/>
            <person name="Yagi K."/>
            <person name="Yamanishi H."/>
            <person name="Zabarovsky E."/>
            <person name="Zhu S."/>
            <person name="Zimmer A."/>
            <person name="Hide W."/>
            <person name="Bult C."/>
            <person name="Grimmond S.M."/>
            <person name="Teasdale R.D."/>
            <person name="Liu E.T."/>
            <person name="Brusic V."/>
            <person name="Quackenbush J."/>
            <person name="Wahlestedt C."/>
            <person name="Mattick J.S."/>
            <person name="Hume D.A."/>
            <person name="Kai C."/>
            <person name="Sasaki D."/>
            <person name="Tomaru Y."/>
            <person name="Fukuda S."/>
            <person name="Kanamori-Katayama M."/>
            <person name="Suzuki M."/>
            <person name="Aoki J."/>
            <person name="Arakawa T."/>
            <person name="Iida J."/>
            <person name="Imamura K."/>
            <person name="Itoh M."/>
            <person name="Kato T."/>
            <person name="Kawaji H."/>
            <person name="Kawagashira N."/>
            <person name="Kawashima T."/>
            <person name="Kojima M."/>
            <person name="Kondo S."/>
            <person name="Konno H."/>
            <person name="Nakano K."/>
            <person name="Ninomiya N."/>
            <person name="Nishio T."/>
            <person name="Okada M."/>
            <person name="Plessy C."/>
            <person name="Shibata K."/>
            <person name="Shiraki T."/>
            <person name="Suzuki S."/>
            <person name="Tagami M."/>
            <person name="Waki K."/>
            <person name="Watahiki A."/>
            <person name="Okamura-Oho Y."/>
            <person name="Suzuki H."/>
            <person name="Kawai J."/>
            <person name="Hayashizaki Y."/>
        </authorList>
    </citation>
    <scope>NUCLEOTIDE SEQUENCE [LARGE SCALE MRNA] (ISOFORM 2)</scope>
    <source>
        <strain>C57BL/6J</strain>
    </source>
</reference>
<reference key="2">
    <citation type="journal article" date="2004" name="Genome Res.">
        <title>The status, quality, and expansion of the NIH full-length cDNA project: the Mammalian Gene Collection (MGC).</title>
        <authorList>
            <consortium name="The MGC Project Team"/>
        </authorList>
    </citation>
    <scope>NUCLEOTIDE SEQUENCE [LARGE SCALE MRNA] (ISOFORM 1)</scope>
    <source>
        <strain>Mix FVB/N</strain>
        <tissue>Mammary tumor</tissue>
    </source>
</reference>
<reference key="3">
    <citation type="journal article" date="2004" name="Proc. Natl. Acad. Sci. U.S.A.">
        <title>Identification and characterization of phosphoseryl-tRNA[Ser]Sec kinase.</title>
        <authorList>
            <person name="Carlson B.A."/>
            <person name="Xu X.M."/>
            <person name="Kryukov G.V."/>
            <person name="Rao M."/>
            <person name="Berry M.J."/>
            <person name="Gladyshev V.N."/>
            <person name="Hatfield D.L."/>
        </authorList>
    </citation>
    <scope>FUNCTION</scope>
    <scope>COFACTOR</scope>
    <scope>PATHWAY</scope>
    <scope>CATALYTIC ACTIVITY</scope>
</reference>